<feature type="signal peptide" evidence="6">
    <location>
        <begin position="1"/>
        <end position="16"/>
    </location>
</feature>
<feature type="chain" id="PRO_0000419052" description="Acidic phospholipase A2 Tgc-E6">
    <location>
        <begin position="17"/>
        <end position="139"/>
    </location>
</feature>
<feature type="active site" evidence="3">
    <location>
        <position position="63"/>
    </location>
</feature>
<feature type="active site" evidence="3">
    <location>
        <position position="105"/>
    </location>
</feature>
<feature type="binding site" evidence="2">
    <location>
        <position position="43"/>
    </location>
    <ligand>
        <name>Ca(2+)</name>
        <dbReference type="ChEBI" id="CHEBI:29108"/>
    </ligand>
</feature>
<feature type="binding site" evidence="2">
    <location>
        <position position="45"/>
    </location>
    <ligand>
        <name>Ca(2+)</name>
        <dbReference type="ChEBI" id="CHEBI:29108"/>
    </ligand>
</feature>
<feature type="binding site" evidence="2">
    <location>
        <position position="47"/>
    </location>
    <ligand>
        <name>Ca(2+)</name>
        <dbReference type="ChEBI" id="CHEBI:29108"/>
    </ligand>
</feature>
<feature type="binding site" evidence="2">
    <location>
        <position position="64"/>
    </location>
    <ligand>
        <name>Ca(2+)</name>
        <dbReference type="ChEBI" id="CHEBI:29108"/>
    </ligand>
</feature>
<feature type="disulfide bond" evidence="2">
    <location>
        <begin position="42"/>
        <end position="132"/>
    </location>
</feature>
<feature type="disulfide bond" evidence="2">
    <location>
        <begin position="44"/>
        <end position="60"/>
    </location>
</feature>
<feature type="disulfide bond" evidence="2">
    <location>
        <begin position="59"/>
        <end position="111"/>
    </location>
</feature>
<feature type="disulfide bond" evidence="2">
    <location>
        <begin position="65"/>
        <end position="139"/>
    </location>
</feature>
<feature type="disulfide bond" evidence="2">
    <location>
        <begin position="66"/>
        <end position="104"/>
    </location>
</feature>
<feature type="disulfide bond" evidence="2">
    <location>
        <begin position="73"/>
        <end position="97"/>
    </location>
</feature>
<feature type="disulfide bond" evidence="2">
    <location>
        <begin position="91"/>
        <end position="102"/>
    </location>
</feature>
<keyword id="KW-0106">Calcium</keyword>
<keyword id="KW-0903">Direct protein sequencing</keyword>
<keyword id="KW-1015">Disulfide bond</keyword>
<keyword id="KW-1199">Hemostasis impairing toxin</keyword>
<keyword id="KW-0378">Hydrolase</keyword>
<keyword id="KW-0479">Metal-binding</keyword>
<keyword id="KW-1201">Platelet aggregation inhibiting toxin</keyword>
<keyword id="KW-0964">Secreted</keyword>
<keyword id="KW-0732">Signal</keyword>
<keyword id="KW-0800">Toxin</keyword>
<accession>A8E2V8</accession>
<protein>
    <recommendedName>
        <fullName>Acidic phospholipase A2 Tgc-E6</fullName>
        <shortName>svPLA2</shortName>
        <ecNumber>3.1.1.4</ecNumber>
    </recommendedName>
    <alternativeName>
        <fullName>Phosphatidylcholine 2-acylhydrolase</fullName>
    </alternativeName>
</protein>
<dbReference type="EC" id="3.1.1.4"/>
<dbReference type="EMBL" id="AY764141">
    <property type="protein sequence ID" value="AAW92121.1"/>
    <property type="molecule type" value="mRNA"/>
</dbReference>
<dbReference type="SMR" id="A8E2V8"/>
<dbReference type="GO" id="GO:0005576">
    <property type="term" value="C:extracellular region"/>
    <property type="evidence" value="ECO:0000304"/>
    <property type="project" value="UniProtKB"/>
</dbReference>
<dbReference type="GO" id="GO:0043655">
    <property type="term" value="C:host extracellular space"/>
    <property type="evidence" value="ECO:0000304"/>
    <property type="project" value="UniProtKB"/>
</dbReference>
<dbReference type="GO" id="GO:0005509">
    <property type="term" value="F:calcium ion binding"/>
    <property type="evidence" value="ECO:0000303"/>
    <property type="project" value="UniProtKB"/>
</dbReference>
<dbReference type="GO" id="GO:0047498">
    <property type="term" value="F:calcium-dependent phospholipase A2 activity"/>
    <property type="evidence" value="ECO:0007669"/>
    <property type="project" value="TreeGrafter"/>
</dbReference>
<dbReference type="GO" id="GO:0004623">
    <property type="term" value="F:phospholipase A2 activity"/>
    <property type="evidence" value="ECO:0000314"/>
    <property type="project" value="UniProtKB"/>
</dbReference>
<dbReference type="GO" id="GO:0005543">
    <property type="term" value="F:phospholipid binding"/>
    <property type="evidence" value="ECO:0007669"/>
    <property type="project" value="TreeGrafter"/>
</dbReference>
<dbReference type="GO" id="GO:0090729">
    <property type="term" value="F:toxin activity"/>
    <property type="evidence" value="ECO:0007669"/>
    <property type="project" value="UniProtKB-KW"/>
</dbReference>
<dbReference type="GO" id="GO:0050482">
    <property type="term" value="P:arachidonate secretion"/>
    <property type="evidence" value="ECO:0007669"/>
    <property type="project" value="InterPro"/>
</dbReference>
<dbReference type="GO" id="GO:0016042">
    <property type="term" value="P:lipid catabolic process"/>
    <property type="evidence" value="ECO:0000314"/>
    <property type="project" value="UniProtKB"/>
</dbReference>
<dbReference type="GO" id="GO:0042130">
    <property type="term" value="P:negative regulation of T cell proliferation"/>
    <property type="evidence" value="ECO:0007669"/>
    <property type="project" value="TreeGrafter"/>
</dbReference>
<dbReference type="GO" id="GO:0006644">
    <property type="term" value="P:phospholipid metabolic process"/>
    <property type="evidence" value="ECO:0000314"/>
    <property type="project" value="UniProtKB"/>
</dbReference>
<dbReference type="GO" id="GO:0044477">
    <property type="term" value="P:venom-mediated suppression of platelet aggregation"/>
    <property type="evidence" value="ECO:0000314"/>
    <property type="project" value="UniProtKB"/>
</dbReference>
<dbReference type="CDD" id="cd00125">
    <property type="entry name" value="PLA2c"/>
    <property type="match status" value="1"/>
</dbReference>
<dbReference type="FunFam" id="1.20.90.10:FF:000001">
    <property type="entry name" value="Basic phospholipase A2 homolog"/>
    <property type="match status" value="1"/>
</dbReference>
<dbReference type="Gene3D" id="1.20.90.10">
    <property type="entry name" value="Phospholipase A2 domain"/>
    <property type="match status" value="1"/>
</dbReference>
<dbReference type="InterPro" id="IPR001211">
    <property type="entry name" value="PLipase_A2"/>
</dbReference>
<dbReference type="InterPro" id="IPR033112">
    <property type="entry name" value="PLipase_A2_Asp_AS"/>
</dbReference>
<dbReference type="InterPro" id="IPR016090">
    <property type="entry name" value="PLipase_A2_dom"/>
</dbReference>
<dbReference type="InterPro" id="IPR036444">
    <property type="entry name" value="PLipase_A2_dom_sf"/>
</dbReference>
<dbReference type="InterPro" id="IPR033113">
    <property type="entry name" value="PLipase_A2_His_AS"/>
</dbReference>
<dbReference type="PANTHER" id="PTHR11716">
    <property type="entry name" value="PHOSPHOLIPASE A2 FAMILY MEMBER"/>
    <property type="match status" value="1"/>
</dbReference>
<dbReference type="PANTHER" id="PTHR11716:SF9">
    <property type="entry name" value="PHOSPHOLIPASE A2, MEMBRANE ASSOCIATED"/>
    <property type="match status" value="1"/>
</dbReference>
<dbReference type="Pfam" id="PF00068">
    <property type="entry name" value="Phospholip_A2_1"/>
    <property type="match status" value="1"/>
</dbReference>
<dbReference type="PRINTS" id="PR00389">
    <property type="entry name" value="PHPHLIPASEA2"/>
</dbReference>
<dbReference type="SMART" id="SM00085">
    <property type="entry name" value="PA2c"/>
    <property type="match status" value="1"/>
</dbReference>
<dbReference type="SUPFAM" id="SSF48619">
    <property type="entry name" value="Phospholipase A2, PLA2"/>
    <property type="match status" value="1"/>
</dbReference>
<dbReference type="PROSITE" id="PS00119">
    <property type="entry name" value="PA2_ASP"/>
    <property type="match status" value="1"/>
</dbReference>
<dbReference type="PROSITE" id="PS00118">
    <property type="entry name" value="PA2_HIS"/>
    <property type="match status" value="1"/>
</dbReference>
<sequence length="139" mass="15689">MRTLWIMAVLLLGVEGSLMQFEMLIMKLAKSSGMFWYSAYGCYCGWGGQGRPQDATDRCCFVHDCCYGKATGCDPKKDVYTYSEENGDIVCGGDDPCRKEVCECDKAAAICFRDNMDTYNSKTYWMFPAKNCQEESEPC</sequence>
<name>PA2A_TRIGS</name>
<organism>
    <name type="scientific">Trimeresurus gracilis</name>
    <name type="common">Kikuchi habu</name>
    <dbReference type="NCBI Taxonomy" id="109781"/>
    <lineage>
        <taxon>Eukaryota</taxon>
        <taxon>Metazoa</taxon>
        <taxon>Chordata</taxon>
        <taxon>Craniata</taxon>
        <taxon>Vertebrata</taxon>
        <taxon>Euteleostomi</taxon>
        <taxon>Lepidosauria</taxon>
        <taxon>Squamata</taxon>
        <taxon>Bifurcata</taxon>
        <taxon>Unidentata</taxon>
        <taxon>Episquamata</taxon>
        <taxon>Toxicofera</taxon>
        <taxon>Serpentes</taxon>
        <taxon>Colubroidea</taxon>
        <taxon>Viperidae</taxon>
        <taxon>Crotalinae</taxon>
        <taxon>Trimeresurus</taxon>
    </lineage>
</organism>
<comment type="function">
    <text evidence="6">Snake venom phospholipase A2 (PLA2) that inhibits the ADP-(IC(50)=272 nM) and collagen-induced (IC(50)=518 nM) human platelet aggregation in platelet rich plasma. Exhibits very high hydrolytic activities toward the synthetic lecithin, and prefers the anionic micelles (dPPC with deoxycholate) to the zwitterionic micelles (dPPC with Triton X-100). PLA2 catalyzes the calcium-dependent hydrolysis of the 2-acyl groups in 3-sn-phosphoglycerides.</text>
</comment>
<comment type="catalytic activity">
    <reaction evidence="4 5">
        <text>a 1,2-diacyl-sn-glycero-3-phosphocholine + H2O = a 1-acyl-sn-glycero-3-phosphocholine + a fatty acid + H(+)</text>
        <dbReference type="Rhea" id="RHEA:15801"/>
        <dbReference type="ChEBI" id="CHEBI:15377"/>
        <dbReference type="ChEBI" id="CHEBI:15378"/>
        <dbReference type="ChEBI" id="CHEBI:28868"/>
        <dbReference type="ChEBI" id="CHEBI:57643"/>
        <dbReference type="ChEBI" id="CHEBI:58168"/>
        <dbReference type="EC" id="3.1.1.4"/>
    </reaction>
</comment>
<comment type="cofactor">
    <cofactor evidence="1">
        <name>Ca(2+)</name>
        <dbReference type="ChEBI" id="CHEBI:29108"/>
    </cofactor>
    <text evidence="1">Binds 1 Ca(2+) ion.</text>
</comment>
<comment type="subunit">
    <text evidence="6">Monomer.</text>
</comment>
<comment type="subcellular location">
    <subcellularLocation>
        <location>Secreted</location>
    </subcellularLocation>
</comment>
<comment type="tissue specificity">
    <text>Expressed by the venom gland.</text>
</comment>
<comment type="mass spectrometry" mass="13891.0" method="MALDI" evidence="6">
    <text>Oxidized forms with mass increases of 16, 32 and 48 are also detected.</text>
</comment>
<comment type="similarity">
    <text evidence="7">Belongs to the phospholipase A2 family. Group II subfamily. D49 sub-subfamily.</text>
</comment>
<proteinExistence type="evidence at protein level"/>
<evidence type="ECO:0000250" key="1"/>
<evidence type="ECO:0000250" key="2">
    <source>
        <dbReference type="UniProtKB" id="O42191"/>
    </source>
</evidence>
<evidence type="ECO:0000250" key="3">
    <source>
        <dbReference type="UniProtKB" id="P06859"/>
    </source>
</evidence>
<evidence type="ECO:0000255" key="4">
    <source>
        <dbReference type="PROSITE-ProRule" id="PRU10035"/>
    </source>
</evidence>
<evidence type="ECO:0000255" key="5">
    <source>
        <dbReference type="PROSITE-ProRule" id="PRU10036"/>
    </source>
</evidence>
<evidence type="ECO:0000269" key="6">
    <source>
    </source>
</evidence>
<evidence type="ECO:0000305" key="7"/>
<reference key="1">
    <citation type="journal article" date="2012" name="Toxicon">
        <title>Cloning and characterization of Trimeresurus gracilis venom phospholipases A(2): comparison with Ovophis okinavensis venom and the systematic implications.</title>
        <authorList>
            <person name="Tsai I.-H."/>
            <person name="Tsai T.-S."/>
            <person name="Wang Y.-M."/>
            <person name="Tu M.-C."/>
            <person name="Chang H.-C."/>
        </authorList>
    </citation>
    <scope>NUCLEOTIDE SEQUENCE [MRNA]</scope>
    <scope>PROTEIN SEQUENCE OF 17-46</scope>
    <scope>FUNCTION</scope>
    <scope>SUBUNIT</scope>
    <scope>MASS SPECTROMETRY</scope>
    <source>
        <tissue>Venom</tissue>
        <tissue>Venom gland</tissue>
    </source>
</reference>